<comment type="function">
    <text evidence="1">Catalyzes the ATP-dependent transfer of a sulfur to tRNA to produce 4-thiouridine in position 8 of tRNAs, which functions as a near-UV photosensor. Also catalyzes the transfer of sulfur to the sulfur carrier protein ThiS, forming ThiS-thiocarboxylate. This is a step in the synthesis of thiazole, in the thiamine biosynthesis pathway. The sulfur is donated as persulfide by IscS.</text>
</comment>
<comment type="catalytic activity">
    <reaction evidence="1">
        <text>[ThiI sulfur-carrier protein]-S-sulfanyl-L-cysteine + a uridine in tRNA + 2 reduced [2Fe-2S]-[ferredoxin] + ATP + H(+) = [ThiI sulfur-carrier protein]-L-cysteine + a 4-thiouridine in tRNA + 2 oxidized [2Fe-2S]-[ferredoxin] + AMP + diphosphate</text>
        <dbReference type="Rhea" id="RHEA:24176"/>
        <dbReference type="Rhea" id="RHEA-COMP:10000"/>
        <dbReference type="Rhea" id="RHEA-COMP:10001"/>
        <dbReference type="Rhea" id="RHEA-COMP:13337"/>
        <dbReference type="Rhea" id="RHEA-COMP:13338"/>
        <dbReference type="Rhea" id="RHEA-COMP:13339"/>
        <dbReference type="Rhea" id="RHEA-COMP:13340"/>
        <dbReference type="ChEBI" id="CHEBI:15378"/>
        <dbReference type="ChEBI" id="CHEBI:29950"/>
        <dbReference type="ChEBI" id="CHEBI:30616"/>
        <dbReference type="ChEBI" id="CHEBI:33019"/>
        <dbReference type="ChEBI" id="CHEBI:33737"/>
        <dbReference type="ChEBI" id="CHEBI:33738"/>
        <dbReference type="ChEBI" id="CHEBI:61963"/>
        <dbReference type="ChEBI" id="CHEBI:65315"/>
        <dbReference type="ChEBI" id="CHEBI:136798"/>
        <dbReference type="ChEBI" id="CHEBI:456215"/>
        <dbReference type="EC" id="2.8.1.4"/>
    </reaction>
</comment>
<comment type="catalytic activity">
    <reaction evidence="1">
        <text>[ThiS sulfur-carrier protein]-C-terminal Gly-Gly-AMP + S-sulfanyl-L-cysteinyl-[cysteine desulfurase] + AH2 = [ThiS sulfur-carrier protein]-C-terminal-Gly-aminoethanethioate + L-cysteinyl-[cysteine desulfurase] + A + AMP + 2 H(+)</text>
        <dbReference type="Rhea" id="RHEA:43340"/>
        <dbReference type="Rhea" id="RHEA-COMP:12157"/>
        <dbReference type="Rhea" id="RHEA-COMP:12158"/>
        <dbReference type="Rhea" id="RHEA-COMP:12910"/>
        <dbReference type="Rhea" id="RHEA-COMP:19908"/>
        <dbReference type="ChEBI" id="CHEBI:13193"/>
        <dbReference type="ChEBI" id="CHEBI:15378"/>
        <dbReference type="ChEBI" id="CHEBI:17499"/>
        <dbReference type="ChEBI" id="CHEBI:29950"/>
        <dbReference type="ChEBI" id="CHEBI:61963"/>
        <dbReference type="ChEBI" id="CHEBI:90618"/>
        <dbReference type="ChEBI" id="CHEBI:232372"/>
        <dbReference type="ChEBI" id="CHEBI:456215"/>
    </reaction>
</comment>
<comment type="pathway">
    <text evidence="1">Cofactor biosynthesis; thiamine diphosphate biosynthesis.</text>
</comment>
<comment type="subcellular location">
    <subcellularLocation>
        <location evidence="1">Cytoplasm</location>
    </subcellularLocation>
</comment>
<comment type="similarity">
    <text evidence="1">Belongs to the ThiI family.</text>
</comment>
<reference key="1">
    <citation type="journal article" date="2007" name="PLoS Genet.">
        <title>The complete genome sequence of Yersinia pseudotuberculosis IP31758, the causative agent of Far East scarlet-like fever.</title>
        <authorList>
            <person name="Eppinger M."/>
            <person name="Rosovitz M.J."/>
            <person name="Fricke W.F."/>
            <person name="Rasko D.A."/>
            <person name="Kokorina G."/>
            <person name="Fayolle C."/>
            <person name="Lindler L.E."/>
            <person name="Carniel E."/>
            <person name="Ravel J."/>
        </authorList>
    </citation>
    <scope>NUCLEOTIDE SEQUENCE [LARGE SCALE GENOMIC DNA]</scope>
    <source>
        <strain>IP 31758</strain>
    </source>
</reference>
<feature type="chain" id="PRO_1000074309" description="tRNA sulfurtransferase">
    <location>
        <begin position="1"/>
        <end position="483"/>
    </location>
</feature>
<feature type="domain" description="THUMP" evidence="1">
    <location>
        <begin position="62"/>
        <end position="166"/>
    </location>
</feature>
<feature type="domain" description="Rhodanese" evidence="1">
    <location>
        <begin position="405"/>
        <end position="483"/>
    </location>
</feature>
<feature type="active site" description="Cysteine persulfide intermediate" evidence="1">
    <location>
        <position position="457"/>
    </location>
</feature>
<feature type="binding site" evidence="1">
    <location>
        <begin position="184"/>
        <end position="185"/>
    </location>
    <ligand>
        <name>ATP</name>
        <dbReference type="ChEBI" id="CHEBI:30616"/>
    </ligand>
</feature>
<feature type="binding site" evidence="1">
    <location>
        <position position="266"/>
    </location>
    <ligand>
        <name>ATP</name>
        <dbReference type="ChEBI" id="CHEBI:30616"/>
    </ligand>
</feature>
<feature type="binding site" evidence="1">
    <location>
        <position position="288"/>
    </location>
    <ligand>
        <name>ATP</name>
        <dbReference type="ChEBI" id="CHEBI:30616"/>
    </ligand>
</feature>
<feature type="binding site" evidence="1">
    <location>
        <position position="297"/>
    </location>
    <ligand>
        <name>ATP</name>
        <dbReference type="ChEBI" id="CHEBI:30616"/>
    </ligand>
</feature>
<feature type="disulfide bond" description="Redox-active" evidence="1">
    <location>
        <begin position="345"/>
        <end position="457"/>
    </location>
</feature>
<evidence type="ECO:0000255" key="1">
    <source>
        <dbReference type="HAMAP-Rule" id="MF_00021"/>
    </source>
</evidence>
<protein>
    <recommendedName>
        <fullName evidence="1">tRNA sulfurtransferase</fullName>
        <ecNumber evidence="1">2.8.1.4</ecNumber>
    </recommendedName>
    <alternativeName>
        <fullName evidence="1">Sulfur carrier protein ThiS sulfurtransferase</fullName>
    </alternativeName>
    <alternativeName>
        <fullName evidence="1">Thiamine biosynthesis protein ThiI</fullName>
    </alternativeName>
    <alternativeName>
        <fullName evidence="1">tRNA 4-thiouridine synthase</fullName>
    </alternativeName>
</protein>
<gene>
    <name evidence="1" type="primary">thiI</name>
    <name type="ordered locus">YpsIP31758_3108</name>
</gene>
<accession>A7FLE0</accession>
<name>THII_YERP3</name>
<keyword id="KW-0067">ATP-binding</keyword>
<keyword id="KW-0963">Cytoplasm</keyword>
<keyword id="KW-1015">Disulfide bond</keyword>
<keyword id="KW-0547">Nucleotide-binding</keyword>
<keyword id="KW-0676">Redox-active center</keyword>
<keyword id="KW-0694">RNA-binding</keyword>
<keyword id="KW-0784">Thiamine biosynthesis</keyword>
<keyword id="KW-0808">Transferase</keyword>
<keyword id="KW-0820">tRNA-binding</keyword>
<organism>
    <name type="scientific">Yersinia pseudotuberculosis serotype O:1b (strain IP 31758)</name>
    <dbReference type="NCBI Taxonomy" id="349747"/>
    <lineage>
        <taxon>Bacteria</taxon>
        <taxon>Pseudomonadati</taxon>
        <taxon>Pseudomonadota</taxon>
        <taxon>Gammaproteobacteria</taxon>
        <taxon>Enterobacterales</taxon>
        <taxon>Yersiniaceae</taxon>
        <taxon>Yersinia</taxon>
    </lineage>
</organism>
<proteinExistence type="inferred from homology"/>
<sequence length="483" mass="54894">MKFIIKLFPEITIKSQSVRLRFIKILTTNIRNVLKHLEDDTLAIVRHWDHIELRTKDDNLGPEICDALTRIPGIHHILEVEDRSYSDMHNIFEQTLEAYRETLVGKTFCVRVKRRGKHEFSSGDVERYVGGGLNQHIESAKVNLTRPQVTVNLEVDQDKLILVKARHEGLGGFPIGTQEDVLSLISGGFDSGVSSYMLMRRGCRVHYCFFNLGGSAHEIGVKQVAHYLWNRFGSSHRVRFIAIDFEPVVGEILEKVEDGQMGVVLKRMMVRAASQVAERYGVQALVTGEALGQVSSQTLTNLRLIDNASDTLILRPLISHDKEHIINLARQIGTEDFAKTMPEYCGVISKSPTVKAVKAKIEEEESHFDFSILDRVVSEAKNVDIREIAQQSREQVVEVETVAELADTDVLLDIRAPDEQEEKPLKLDQVEVRSLPFYKLSSQFADLDQSKTYLLYCDRGVMSRLQALYLREQGYTNVKVYRP</sequence>
<dbReference type="EC" id="2.8.1.4" evidence="1"/>
<dbReference type="EMBL" id="CP000720">
    <property type="protein sequence ID" value="ABS46994.1"/>
    <property type="molecule type" value="Genomic_DNA"/>
</dbReference>
<dbReference type="RefSeq" id="WP_002208658.1">
    <property type="nucleotide sequence ID" value="NC_009708.1"/>
</dbReference>
<dbReference type="SMR" id="A7FLE0"/>
<dbReference type="GeneID" id="57975539"/>
<dbReference type="KEGG" id="ypi:YpsIP31758_3108"/>
<dbReference type="HOGENOM" id="CLU_037952_4_1_6"/>
<dbReference type="UniPathway" id="UPA00060"/>
<dbReference type="Proteomes" id="UP000002412">
    <property type="component" value="Chromosome"/>
</dbReference>
<dbReference type="GO" id="GO:0005829">
    <property type="term" value="C:cytosol"/>
    <property type="evidence" value="ECO:0007669"/>
    <property type="project" value="TreeGrafter"/>
</dbReference>
<dbReference type="GO" id="GO:0005524">
    <property type="term" value="F:ATP binding"/>
    <property type="evidence" value="ECO:0007669"/>
    <property type="project" value="UniProtKB-UniRule"/>
</dbReference>
<dbReference type="GO" id="GO:0004810">
    <property type="term" value="F:CCA tRNA nucleotidyltransferase activity"/>
    <property type="evidence" value="ECO:0007669"/>
    <property type="project" value="InterPro"/>
</dbReference>
<dbReference type="GO" id="GO:0000049">
    <property type="term" value="F:tRNA binding"/>
    <property type="evidence" value="ECO:0007669"/>
    <property type="project" value="UniProtKB-UniRule"/>
</dbReference>
<dbReference type="GO" id="GO:0140741">
    <property type="term" value="F:tRNA-uracil-4 sulfurtransferase activity"/>
    <property type="evidence" value="ECO:0007669"/>
    <property type="project" value="UniProtKB-EC"/>
</dbReference>
<dbReference type="GO" id="GO:0009228">
    <property type="term" value="P:thiamine biosynthetic process"/>
    <property type="evidence" value="ECO:0007669"/>
    <property type="project" value="UniProtKB-KW"/>
</dbReference>
<dbReference type="GO" id="GO:0009229">
    <property type="term" value="P:thiamine diphosphate biosynthetic process"/>
    <property type="evidence" value="ECO:0007669"/>
    <property type="project" value="UniProtKB-UniRule"/>
</dbReference>
<dbReference type="GO" id="GO:0052837">
    <property type="term" value="P:thiazole biosynthetic process"/>
    <property type="evidence" value="ECO:0007669"/>
    <property type="project" value="InterPro"/>
</dbReference>
<dbReference type="GO" id="GO:0002937">
    <property type="term" value="P:tRNA 4-thiouridine biosynthesis"/>
    <property type="evidence" value="ECO:0007669"/>
    <property type="project" value="TreeGrafter"/>
</dbReference>
<dbReference type="CDD" id="cd01712">
    <property type="entry name" value="PPase_ThiI"/>
    <property type="match status" value="1"/>
</dbReference>
<dbReference type="CDD" id="cd00158">
    <property type="entry name" value="RHOD"/>
    <property type="match status" value="1"/>
</dbReference>
<dbReference type="CDD" id="cd11716">
    <property type="entry name" value="THUMP_ThiI"/>
    <property type="match status" value="1"/>
</dbReference>
<dbReference type="FunFam" id="3.30.2130.30:FF:000002">
    <property type="entry name" value="tRNA sulfurtransferase"/>
    <property type="match status" value="1"/>
</dbReference>
<dbReference type="FunFam" id="3.40.250.10:FF:000003">
    <property type="entry name" value="tRNA sulfurtransferase"/>
    <property type="match status" value="1"/>
</dbReference>
<dbReference type="FunFam" id="3.40.50.620:FF:000029">
    <property type="entry name" value="tRNA sulfurtransferase"/>
    <property type="match status" value="1"/>
</dbReference>
<dbReference type="Gene3D" id="3.30.2130.30">
    <property type="match status" value="1"/>
</dbReference>
<dbReference type="Gene3D" id="3.40.50.620">
    <property type="entry name" value="HUPs"/>
    <property type="match status" value="1"/>
</dbReference>
<dbReference type="Gene3D" id="3.40.250.10">
    <property type="entry name" value="Rhodanese-like domain"/>
    <property type="match status" value="1"/>
</dbReference>
<dbReference type="HAMAP" id="MF_00021">
    <property type="entry name" value="ThiI"/>
    <property type="match status" value="1"/>
</dbReference>
<dbReference type="InterPro" id="IPR001763">
    <property type="entry name" value="Rhodanese-like_dom"/>
</dbReference>
<dbReference type="InterPro" id="IPR036873">
    <property type="entry name" value="Rhodanese-like_dom_sf"/>
</dbReference>
<dbReference type="InterPro" id="IPR014729">
    <property type="entry name" value="Rossmann-like_a/b/a_fold"/>
</dbReference>
<dbReference type="InterPro" id="IPR020536">
    <property type="entry name" value="ThiI_AANH"/>
</dbReference>
<dbReference type="InterPro" id="IPR054173">
    <property type="entry name" value="ThiI_fer"/>
</dbReference>
<dbReference type="InterPro" id="IPR049961">
    <property type="entry name" value="ThiI_N"/>
</dbReference>
<dbReference type="InterPro" id="IPR026340">
    <property type="entry name" value="THII_Thiazole_biosynth_dom"/>
</dbReference>
<dbReference type="InterPro" id="IPR004114">
    <property type="entry name" value="THUMP_dom"/>
</dbReference>
<dbReference type="InterPro" id="IPR049962">
    <property type="entry name" value="THUMP_ThiI"/>
</dbReference>
<dbReference type="InterPro" id="IPR003720">
    <property type="entry name" value="tRNA_STrfase"/>
</dbReference>
<dbReference type="InterPro" id="IPR050102">
    <property type="entry name" value="tRNA_sulfurtransferase_ThiI"/>
</dbReference>
<dbReference type="NCBIfam" id="TIGR04271">
    <property type="entry name" value="ThiI_C_thiazole"/>
    <property type="match status" value="1"/>
</dbReference>
<dbReference type="NCBIfam" id="TIGR00342">
    <property type="entry name" value="tRNA uracil 4-sulfurtransferase ThiI"/>
    <property type="match status" value="1"/>
</dbReference>
<dbReference type="PANTHER" id="PTHR43209">
    <property type="entry name" value="TRNA SULFURTRANSFERASE"/>
    <property type="match status" value="1"/>
</dbReference>
<dbReference type="PANTHER" id="PTHR43209:SF1">
    <property type="entry name" value="TRNA SULFURTRANSFERASE"/>
    <property type="match status" value="1"/>
</dbReference>
<dbReference type="Pfam" id="PF00581">
    <property type="entry name" value="Rhodanese"/>
    <property type="match status" value="1"/>
</dbReference>
<dbReference type="Pfam" id="PF02568">
    <property type="entry name" value="ThiI"/>
    <property type="match status" value="1"/>
</dbReference>
<dbReference type="Pfam" id="PF22025">
    <property type="entry name" value="ThiI_fer"/>
    <property type="match status" value="1"/>
</dbReference>
<dbReference type="Pfam" id="PF02926">
    <property type="entry name" value="THUMP"/>
    <property type="match status" value="1"/>
</dbReference>
<dbReference type="SMART" id="SM00981">
    <property type="entry name" value="THUMP"/>
    <property type="match status" value="1"/>
</dbReference>
<dbReference type="SUPFAM" id="SSF52402">
    <property type="entry name" value="Adenine nucleotide alpha hydrolases-like"/>
    <property type="match status" value="1"/>
</dbReference>
<dbReference type="SUPFAM" id="SSF52821">
    <property type="entry name" value="Rhodanese/Cell cycle control phosphatase"/>
    <property type="match status" value="1"/>
</dbReference>
<dbReference type="SUPFAM" id="SSF143437">
    <property type="entry name" value="THUMP domain-like"/>
    <property type="match status" value="1"/>
</dbReference>
<dbReference type="PROSITE" id="PS50206">
    <property type="entry name" value="RHODANESE_3"/>
    <property type="match status" value="1"/>
</dbReference>
<dbReference type="PROSITE" id="PS51165">
    <property type="entry name" value="THUMP"/>
    <property type="match status" value="1"/>
</dbReference>